<keyword id="KW-0021">Allosteric enzyme</keyword>
<keyword id="KW-0067">ATP-binding</keyword>
<keyword id="KW-0119">Carbohydrate metabolism</keyword>
<keyword id="KW-0320">Glycogen biosynthesis</keyword>
<keyword id="KW-0321">Glycogen metabolism</keyword>
<keyword id="KW-0547">Nucleotide-binding</keyword>
<keyword id="KW-0548">Nucleotidyltransferase</keyword>
<keyword id="KW-0808">Transferase</keyword>
<name>GLGC_SALPK</name>
<dbReference type="EC" id="2.7.7.27" evidence="1"/>
<dbReference type="EMBL" id="FM200053">
    <property type="protein sequence ID" value="CAR61417.1"/>
    <property type="molecule type" value="Genomic_DNA"/>
</dbReference>
<dbReference type="RefSeq" id="WP_000253995.1">
    <property type="nucleotide sequence ID" value="NC_011147.1"/>
</dbReference>
<dbReference type="SMR" id="B5BHI0"/>
<dbReference type="KEGG" id="sek:SSPA3162"/>
<dbReference type="HOGENOM" id="CLU_029499_14_1_6"/>
<dbReference type="UniPathway" id="UPA00164"/>
<dbReference type="Proteomes" id="UP000001869">
    <property type="component" value="Chromosome"/>
</dbReference>
<dbReference type="GO" id="GO:0005524">
    <property type="term" value="F:ATP binding"/>
    <property type="evidence" value="ECO:0007669"/>
    <property type="project" value="UniProtKB-KW"/>
</dbReference>
<dbReference type="GO" id="GO:0008878">
    <property type="term" value="F:glucose-1-phosphate adenylyltransferase activity"/>
    <property type="evidence" value="ECO:0007669"/>
    <property type="project" value="UniProtKB-UniRule"/>
</dbReference>
<dbReference type="GO" id="GO:0005978">
    <property type="term" value="P:glycogen biosynthetic process"/>
    <property type="evidence" value="ECO:0007669"/>
    <property type="project" value="UniProtKB-UniRule"/>
</dbReference>
<dbReference type="CDD" id="cd02508">
    <property type="entry name" value="ADP_Glucose_PP"/>
    <property type="match status" value="1"/>
</dbReference>
<dbReference type="CDD" id="cd04651">
    <property type="entry name" value="LbH_G1P_AT_C"/>
    <property type="match status" value="1"/>
</dbReference>
<dbReference type="FunFam" id="2.160.10.10:FF:000006">
    <property type="entry name" value="Glucose-1-phosphate adenylyltransferase"/>
    <property type="match status" value="1"/>
</dbReference>
<dbReference type="FunFam" id="3.90.550.10:FF:000014">
    <property type="entry name" value="Glucose-1-phosphate adenylyltransferase"/>
    <property type="match status" value="1"/>
</dbReference>
<dbReference type="Gene3D" id="2.160.10.10">
    <property type="entry name" value="Hexapeptide repeat proteins"/>
    <property type="match status" value="1"/>
</dbReference>
<dbReference type="Gene3D" id="3.90.550.10">
    <property type="entry name" value="Spore Coat Polysaccharide Biosynthesis Protein SpsA, Chain A"/>
    <property type="match status" value="1"/>
</dbReference>
<dbReference type="HAMAP" id="MF_00624">
    <property type="entry name" value="GlgC"/>
    <property type="match status" value="1"/>
</dbReference>
<dbReference type="InterPro" id="IPR011831">
    <property type="entry name" value="ADP-Glc_PPase"/>
</dbReference>
<dbReference type="InterPro" id="IPR005836">
    <property type="entry name" value="ADP_Glu_pyroP_CS"/>
</dbReference>
<dbReference type="InterPro" id="IPR023049">
    <property type="entry name" value="GlgC_bac"/>
</dbReference>
<dbReference type="InterPro" id="IPR056818">
    <property type="entry name" value="GlmU/GlgC-like_hexapep"/>
</dbReference>
<dbReference type="InterPro" id="IPR005835">
    <property type="entry name" value="NTP_transferase_dom"/>
</dbReference>
<dbReference type="InterPro" id="IPR029044">
    <property type="entry name" value="Nucleotide-diphossugar_trans"/>
</dbReference>
<dbReference type="InterPro" id="IPR011004">
    <property type="entry name" value="Trimer_LpxA-like_sf"/>
</dbReference>
<dbReference type="NCBIfam" id="TIGR02091">
    <property type="entry name" value="glgC"/>
    <property type="match status" value="1"/>
</dbReference>
<dbReference type="NCBIfam" id="NF001947">
    <property type="entry name" value="PRK00725.1"/>
    <property type="match status" value="1"/>
</dbReference>
<dbReference type="NCBIfam" id="NF002023">
    <property type="entry name" value="PRK00844.1"/>
    <property type="match status" value="1"/>
</dbReference>
<dbReference type="PANTHER" id="PTHR43523:SF2">
    <property type="entry name" value="GLUCOSE-1-PHOSPHATE ADENYLYLTRANSFERASE"/>
    <property type="match status" value="1"/>
</dbReference>
<dbReference type="PANTHER" id="PTHR43523">
    <property type="entry name" value="GLUCOSE-1-PHOSPHATE ADENYLYLTRANSFERASE-RELATED"/>
    <property type="match status" value="1"/>
</dbReference>
<dbReference type="Pfam" id="PF24894">
    <property type="entry name" value="Hexapep_GlmU"/>
    <property type="match status" value="1"/>
</dbReference>
<dbReference type="Pfam" id="PF00483">
    <property type="entry name" value="NTP_transferase"/>
    <property type="match status" value="1"/>
</dbReference>
<dbReference type="SUPFAM" id="SSF53448">
    <property type="entry name" value="Nucleotide-diphospho-sugar transferases"/>
    <property type="match status" value="1"/>
</dbReference>
<dbReference type="SUPFAM" id="SSF51161">
    <property type="entry name" value="Trimeric LpxA-like enzymes"/>
    <property type="match status" value="1"/>
</dbReference>
<dbReference type="PROSITE" id="PS00808">
    <property type="entry name" value="ADP_GLC_PYROPHOSPH_1"/>
    <property type="match status" value="1"/>
</dbReference>
<dbReference type="PROSITE" id="PS00809">
    <property type="entry name" value="ADP_GLC_PYROPHOSPH_2"/>
    <property type="match status" value="1"/>
</dbReference>
<dbReference type="PROSITE" id="PS00810">
    <property type="entry name" value="ADP_GLC_PYROPHOSPH_3"/>
    <property type="match status" value="1"/>
</dbReference>
<sequence length="431" mass="48462">MVSLEKNDRVMLARQLPLKSVALILAGGRGTRLKDLTNKRAKPAVHFGGKFRIIDFALSNCLNSGIRRIGVITQYQSHTLVQHIQRGWSLFSEEMNEFVDLLPAQQRMKGENWYRGTADAVTQNLDIIRRYKAEYVVILAGDHIYKQDYSRMLIDHVEKGARCTVACMPVPIKEATAFGVMAVDESDKIIDFVEKPANPPAMPGDASKSLASMGIYVFDADYLYELLAADDKDDASSHDFGKDIIPKITREGMAYAHPFPLSCVQSDPQAEPYWRDVGTLEAYWKANLDLASVTPELDMYDQNWPIRTHMESLPPAKFVQDRSGSHGMTLNSLVSGGCIISGSVVVQSVLFPRVRINSFCNIDSAVLLPEVWVGRSCRLRRCVIDRACIIPEGMVIGENAEEDARRFYRSEEGIVLVTREMLRKLQVKQER</sequence>
<proteinExistence type="inferred from homology"/>
<evidence type="ECO:0000255" key="1">
    <source>
        <dbReference type="HAMAP-Rule" id="MF_00624"/>
    </source>
</evidence>
<protein>
    <recommendedName>
        <fullName evidence="1">Glucose-1-phosphate adenylyltransferase</fullName>
        <ecNumber evidence="1">2.7.7.27</ecNumber>
    </recommendedName>
    <alternativeName>
        <fullName evidence="1">ADP-glucose pyrophosphorylase</fullName>
        <shortName evidence="1">ADPGlc PPase</shortName>
    </alternativeName>
    <alternativeName>
        <fullName evidence="1">ADP-glucose synthase</fullName>
    </alternativeName>
</protein>
<feature type="chain" id="PRO_1000130502" description="Glucose-1-phosphate adenylyltransferase">
    <location>
        <begin position="1"/>
        <end position="431"/>
    </location>
</feature>
<feature type="binding site" evidence="1">
    <location>
        <position position="39"/>
    </location>
    <ligand>
        <name>beta-D-fructose 1,6-bisphosphate</name>
        <dbReference type="ChEBI" id="CHEBI:32966"/>
    </ligand>
</feature>
<feature type="binding site" evidence="1">
    <location>
        <position position="40"/>
    </location>
    <ligand>
        <name>AMP</name>
        <dbReference type="ChEBI" id="CHEBI:456215"/>
    </ligand>
</feature>
<feature type="binding site" evidence="1">
    <location>
        <position position="46"/>
    </location>
    <ligand>
        <name>AMP</name>
        <dbReference type="ChEBI" id="CHEBI:456215"/>
    </ligand>
</feature>
<feature type="binding site" evidence="1">
    <location>
        <position position="52"/>
    </location>
    <ligand>
        <name>AMP</name>
        <dbReference type="ChEBI" id="CHEBI:456215"/>
    </ligand>
</feature>
<feature type="binding site" evidence="1">
    <location>
        <position position="114"/>
    </location>
    <ligand>
        <name>alpha-D-glucose 1-phosphate</name>
        <dbReference type="ChEBI" id="CHEBI:58601"/>
    </ligand>
</feature>
<feature type="binding site" evidence="1">
    <location>
        <position position="130"/>
    </location>
    <ligand>
        <name>AMP</name>
        <dbReference type="ChEBI" id="CHEBI:456215"/>
    </ligand>
</feature>
<feature type="binding site" evidence="1">
    <location>
        <position position="179"/>
    </location>
    <ligand>
        <name>alpha-D-glucose 1-phosphate</name>
        <dbReference type="ChEBI" id="CHEBI:58601"/>
    </ligand>
</feature>
<feature type="binding site" evidence="1">
    <location>
        <begin position="194"/>
        <end position="195"/>
    </location>
    <ligand>
        <name>alpha-D-glucose 1-phosphate</name>
        <dbReference type="ChEBI" id="CHEBI:58601"/>
    </ligand>
</feature>
<feature type="binding site" evidence="1">
    <location>
        <position position="212"/>
    </location>
    <ligand>
        <name>alpha-D-glucose 1-phosphate</name>
        <dbReference type="ChEBI" id="CHEBI:58601"/>
    </ligand>
</feature>
<feature type="binding site" evidence="1">
    <location>
        <position position="370"/>
    </location>
    <ligand>
        <name>AMP</name>
        <dbReference type="ChEBI" id="CHEBI:456215"/>
    </ligand>
</feature>
<feature type="binding site" evidence="1">
    <location>
        <position position="386"/>
    </location>
    <ligand>
        <name>AMP</name>
        <dbReference type="ChEBI" id="CHEBI:456215"/>
    </ligand>
</feature>
<feature type="binding site" evidence="1">
    <location>
        <begin position="419"/>
        <end position="423"/>
    </location>
    <ligand>
        <name>beta-D-fructose 1,6-bisphosphate</name>
        <dbReference type="ChEBI" id="CHEBI:32966"/>
    </ligand>
</feature>
<feature type="binding site" evidence="1">
    <location>
        <begin position="429"/>
        <end position="431"/>
    </location>
    <ligand>
        <name>beta-D-fructose 1,6-bisphosphate</name>
        <dbReference type="ChEBI" id="CHEBI:32966"/>
    </ligand>
</feature>
<feature type="site" description="Could play a key role in the communication between the regulatory and the substrate sites" evidence="1">
    <location>
        <position position="74"/>
    </location>
</feature>
<feature type="site" description="Could play a key role in the communication between the regulatory and the substrate sites" evidence="1">
    <location>
        <position position="113"/>
    </location>
</feature>
<comment type="function">
    <text evidence="1">Involved in the biosynthesis of ADP-glucose, a building block required for the elongation reactions to produce glycogen. Catalyzes the reaction between ATP and alpha-D-glucose 1-phosphate (G1P) to produce pyrophosphate and ADP-Glc.</text>
</comment>
<comment type="catalytic activity">
    <reaction evidence="1">
        <text>alpha-D-glucose 1-phosphate + ATP + H(+) = ADP-alpha-D-glucose + diphosphate</text>
        <dbReference type="Rhea" id="RHEA:12120"/>
        <dbReference type="ChEBI" id="CHEBI:15378"/>
        <dbReference type="ChEBI" id="CHEBI:30616"/>
        <dbReference type="ChEBI" id="CHEBI:33019"/>
        <dbReference type="ChEBI" id="CHEBI:57498"/>
        <dbReference type="ChEBI" id="CHEBI:58601"/>
        <dbReference type="EC" id="2.7.7.27"/>
    </reaction>
</comment>
<comment type="activity regulation">
    <text evidence="1">Allosterically activated by fructose-1,6-bisphosphate (F16BP) and inhibited by AMP.</text>
</comment>
<comment type="pathway">
    <text evidence="1">Glycan biosynthesis; glycogen biosynthesis.</text>
</comment>
<comment type="subunit">
    <text evidence="1">Homotetramer.</text>
</comment>
<comment type="similarity">
    <text evidence="1">Belongs to the bacterial/plant glucose-1-phosphate adenylyltransferase family.</text>
</comment>
<accession>B5BHI0</accession>
<reference key="1">
    <citation type="journal article" date="2009" name="BMC Genomics">
        <title>Pseudogene accumulation in the evolutionary histories of Salmonella enterica serovars Paratyphi A and Typhi.</title>
        <authorList>
            <person name="Holt K.E."/>
            <person name="Thomson N.R."/>
            <person name="Wain J."/>
            <person name="Langridge G.C."/>
            <person name="Hasan R."/>
            <person name="Bhutta Z.A."/>
            <person name="Quail M.A."/>
            <person name="Norbertczak H."/>
            <person name="Walker D."/>
            <person name="Simmonds M."/>
            <person name="White B."/>
            <person name="Bason N."/>
            <person name="Mungall K."/>
            <person name="Dougan G."/>
            <person name="Parkhill J."/>
        </authorList>
    </citation>
    <scope>NUCLEOTIDE SEQUENCE [LARGE SCALE GENOMIC DNA]</scope>
    <source>
        <strain>AKU_12601</strain>
    </source>
</reference>
<organism>
    <name type="scientific">Salmonella paratyphi A (strain AKU_12601)</name>
    <dbReference type="NCBI Taxonomy" id="554290"/>
    <lineage>
        <taxon>Bacteria</taxon>
        <taxon>Pseudomonadati</taxon>
        <taxon>Pseudomonadota</taxon>
        <taxon>Gammaproteobacteria</taxon>
        <taxon>Enterobacterales</taxon>
        <taxon>Enterobacteriaceae</taxon>
        <taxon>Salmonella</taxon>
    </lineage>
</organism>
<gene>
    <name evidence="1" type="primary">glgC</name>
    <name type="ordered locus">SSPA3162</name>
</gene>